<accession>Q8GY54</accession>
<reference key="1">
    <citation type="journal article" date="2000" name="Nature">
        <title>Sequence and analysis of chromosome 5 of the plant Arabidopsis thaliana.</title>
        <authorList>
            <person name="Tabata S."/>
            <person name="Kaneko T."/>
            <person name="Nakamura Y."/>
            <person name="Kotani H."/>
            <person name="Kato T."/>
            <person name="Asamizu E."/>
            <person name="Miyajima N."/>
            <person name="Sasamoto S."/>
            <person name="Kimura T."/>
            <person name="Hosouchi T."/>
            <person name="Kawashima K."/>
            <person name="Kohara M."/>
            <person name="Matsumoto M."/>
            <person name="Matsuno A."/>
            <person name="Muraki A."/>
            <person name="Nakayama S."/>
            <person name="Nakazaki N."/>
            <person name="Naruo K."/>
            <person name="Okumura S."/>
            <person name="Shinpo S."/>
            <person name="Takeuchi C."/>
            <person name="Wada T."/>
            <person name="Watanabe A."/>
            <person name="Yamada M."/>
            <person name="Yasuda M."/>
            <person name="Sato S."/>
            <person name="de la Bastide M."/>
            <person name="Huang E."/>
            <person name="Spiegel L."/>
            <person name="Gnoj L."/>
            <person name="O'Shaughnessy A."/>
            <person name="Preston R."/>
            <person name="Habermann K."/>
            <person name="Murray J."/>
            <person name="Johnson D."/>
            <person name="Rohlfing T."/>
            <person name="Nelson J."/>
            <person name="Stoneking T."/>
            <person name="Pepin K."/>
            <person name="Spieth J."/>
            <person name="Sekhon M."/>
            <person name="Armstrong J."/>
            <person name="Becker M."/>
            <person name="Belter E."/>
            <person name="Cordum H."/>
            <person name="Cordes M."/>
            <person name="Courtney L."/>
            <person name="Courtney W."/>
            <person name="Dante M."/>
            <person name="Du H."/>
            <person name="Edwards J."/>
            <person name="Fryman J."/>
            <person name="Haakensen B."/>
            <person name="Lamar E."/>
            <person name="Latreille P."/>
            <person name="Leonard S."/>
            <person name="Meyer R."/>
            <person name="Mulvaney E."/>
            <person name="Ozersky P."/>
            <person name="Riley A."/>
            <person name="Strowmatt C."/>
            <person name="Wagner-McPherson C."/>
            <person name="Wollam A."/>
            <person name="Yoakum M."/>
            <person name="Bell M."/>
            <person name="Dedhia N."/>
            <person name="Parnell L."/>
            <person name="Shah R."/>
            <person name="Rodriguez M."/>
            <person name="Hoon See L."/>
            <person name="Vil D."/>
            <person name="Baker J."/>
            <person name="Kirchoff K."/>
            <person name="Toth K."/>
            <person name="King L."/>
            <person name="Bahret A."/>
            <person name="Miller B."/>
            <person name="Marra M.A."/>
            <person name="Martienssen R."/>
            <person name="McCombie W.R."/>
            <person name="Wilson R.K."/>
            <person name="Murphy G."/>
            <person name="Bancroft I."/>
            <person name="Volckaert G."/>
            <person name="Wambutt R."/>
            <person name="Duesterhoeft A."/>
            <person name="Stiekema W."/>
            <person name="Pohl T."/>
            <person name="Entian K.-D."/>
            <person name="Terryn N."/>
            <person name="Hartley N."/>
            <person name="Bent E."/>
            <person name="Johnson S."/>
            <person name="Langham S.-A."/>
            <person name="McCullagh B."/>
            <person name="Robben J."/>
            <person name="Grymonprez B."/>
            <person name="Zimmermann W."/>
            <person name="Ramsperger U."/>
            <person name="Wedler H."/>
            <person name="Balke K."/>
            <person name="Wedler E."/>
            <person name="Peters S."/>
            <person name="van Staveren M."/>
            <person name="Dirkse W."/>
            <person name="Mooijman P."/>
            <person name="Klein Lankhorst R."/>
            <person name="Weitzenegger T."/>
            <person name="Bothe G."/>
            <person name="Rose M."/>
            <person name="Hauf J."/>
            <person name="Berneiser S."/>
            <person name="Hempel S."/>
            <person name="Feldpausch M."/>
            <person name="Lamberth S."/>
            <person name="Villarroel R."/>
            <person name="Gielen J."/>
            <person name="Ardiles W."/>
            <person name="Bents O."/>
            <person name="Lemcke K."/>
            <person name="Kolesov G."/>
            <person name="Mayer K.F.X."/>
            <person name="Rudd S."/>
            <person name="Schoof H."/>
            <person name="Schueller C."/>
            <person name="Zaccaria P."/>
            <person name="Mewes H.-W."/>
            <person name="Bevan M."/>
            <person name="Fransz P.F."/>
        </authorList>
    </citation>
    <scope>NUCLEOTIDE SEQUENCE [LARGE SCALE GENOMIC DNA]</scope>
    <source>
        <strain>cv. Columbia</strain>
    </source>
</reference>
<reference key="2">
    <citation type="journal article" date="2017" name="Plant J.">
        <title>Araport11: a complete reannotation of the Arabidopsis thaliana reference genome.</title>
        <authorList>
            <person name="Cheng C.Y."/>
            <person name="Krishnakumar V."/>
            <person name="Chan A.P."/>
            <person name="Thibaud-Nissen F."/>
            <person name="Schobel S."/>
            <person name="Town C.D."/>
        </authorList>
    </citation>
    <scope>GENOME REANNOTATION</scope>
    <source>
        <strain>cv. Columbia</strain>
    </source>
</reference>
<reference key="3">
    <citation type="journal article" date="2002" name="Science">
        <title>Functional annotation of a full-length Arabidopsis cDNA collection.</title>
        <authorList>
            <person name="Seki M."/>
            <person name="Narusaka M."/>
            <person name="Kamiya A."/>
            <person name="Ishida J."/>
            <person name="Satou M."/>
            <person name="Sakurai T."/>
            <person name="Nakajima M."/>
            <person name="Enju A."/>
            <person name="Akiyama K."/>
            <person name="Oono Y."/>
            <person name="Muramatsu M."/>
            <person name="Hayashizaki Y."/>
            <person name="Kawai J."/>
            <person name="Carninci P."/>
            <person name="Itoh M."/>
            <person name="Ishii Y."/>
            <person name="Arakawa T."/>
            <person name="Shibata K."/>
            <person name="Shinagawa A."/>
            <person name="Shinozaki K."/>
        </authorList>
    </citation>
    <scope>NUCLEOTIDE SEQUENCE [LARGE SCALE MRNA]</scope>
    <source>
        <strain>cv. Columbia</strain>
    </source>
</reference>
<reference key="4">
    <citation type="journal article" date="2003" name="Science">
        <title>Empirical analysis of transcriptional activity in the Arabidopsis genome.</title>
        <authorList>
            <person name="Yamada K."/>
            <person name="Lim J."/>
            <person name="Dale J.M."/>
            <person name="Chen H."/>
            <person name="Shinn P."/>
            <person name="Palm C.J."/>
            <person name="Southwick A.M."/>
            <person name="Wu H.C."/>
            <person name="Kim C.J."/>
            <person name="Nguyen M."/>
            <person name="Pham P.K."/>
            <person name="Cheuk R.F."/>
            <person name="Karlin-Newmann G."/>
            <person name="Liu S.X."/>
            <person name="Lam B."/>
            <person name="Sakano H."/>
            <person name="Wu T."/>
            <person name="Yu G."/>
            <person name="Miranda M."/>
            <person name="Quach H.L."/>
            <person name="Tripp M."/>
            <person name="Chang C.H."/>
            <person name="Lee J.M."/>
            <person name="Toriumi M.J."/>
            <person name="Chan M.M."/>
            <person name="Tang C.C."/>
            <person name="Onodera C.S."/>
            <person name="Deng J.M."/>
            <person name="Akiyama K."/>
            <person name="Ansari Y."/>
            <person name="Arakawa T."/>
            <person name="Banh J."/>
            <person name="Banno F."/>
            <person name="Bowser L."/>
            <person name="Brooks S.Y."/>
            <person name="Carninci P."/>
            <person name="Chao Q."/>
            <person name="Choy N."/>
            <person name="Enju A."/>
            <person name="Goldsmith A.D."/>
            <person name="Gurjal M."/>
            <person name="Hansen N.F."/>
            <person name="Hayashizaki Y."/>
            <person name="Johnson-Hopson C."/>
            <person name="Hsuan V.W."/>
            <person name="Iida K."/>
            <person name="Karnes M."/>
            <person name="Khan S."/>
            <person name="Koesema E."/>
            <person name="Ishida J."/>
            <person name="Jiang P.X."/>
            <person name="Jones T."/>
            <person name="Kawai J."/>
            <person name="Kamiya A."/>
            <person name="Meyers C."/>
            <person name="Nakajima M."/>
            <person name="Narusaka M."/>
            <person name="Seki M."/>
            <person name="Sakurai T."/>
            <person name="Satou M."/>
            <person name="Tamse R."/>
            <person name="Vaysberg M."/>
            <person name="Wallender E.K."/>
            <person name="Wong C."/>
            <person name="Yamamura Y."/>
            <person name="Yuan S."/>
            <person name="Shinozaki K."/>
            <person name="Davis R.W."/>
            <person name="Theologis A."/>
            <person name="Ecker J.R."/>
        </authorList>
    </citation>
    <scope>NUCLEOTIDE SEQUENCE [LARGE SCALE MRNA]</scope>
    <source>
        <strain>cv. Columbia</strain>
    </source>
</reference>
<reference key="5">
    <citation type="journal article" date="2005" name="Mutat. Res.">
        <title>Transcriptome profiling reveals similarities and differences in plant responses to cadmium and lead.</title>
        <authorList>
            <person name="Kovalchuk I."/>
            <person name="Titov V."/>
            <person name="Hohn B."/>
            <person name="Kovalchuk O."/>
        </authorList>
    </citation>
    <scope>INDUCTION</scope>
</reference>
<reference key="6">
    <citation type="journal article" date="2013" name="Plant Cell">
        <title>A gamma-glutamyl cyclotransferase protects Arabidopsis plants from heavy metal toxicity by recycling glutamate to maintain glutathione homeostasis.</title>
        <authorList>
            <person name="Paulose B."/>
            <person name="Chhikara S."/>
            <person name="Coomey J."/>
            <person name="Jung H.I."/>
            <person name="Vatamaniuk O."/>
            <person name="Dhankher O.P."/>
        </authorList>
    </citation>
    <scope>FUNCTION</scope>
    <scope>CATALYTIC ACTIVITY</scope>
    <scope>SUBCELLULAR LOCATION</scope>
    <scope>TISSUE SPECIFICITY</scope>
    <scope>INDUCTION BY ARSENITE</scope>
    <scope>DISRUPTION PHENOTYPE</scope>
</reference>
<feature type="chain" id="PRO_0000436853" description="Gamma-glutamylcyclotransferase 2-1">
    <location>
        <begin position="1"/>
        <end position="216"/>
    </location>
</feature>
<feature type="active site" description="Proton acceptor" evidence="1">
    <location>
        <position position="87"/>
    </location>
</feature>
<feature type="binding site" evidence="1">
    <location>
        <begin position="5"/>
        <end position="10"/>
    </location>
    <ligand>
        <name>substrate</name>
    </ligand>
</feature>
<name>GCT21_ARATH</name>
<protein>
    <recommendedName>
        <fullName evidence="6">Gamma-glutamylcyclotransferase 2-1</fullName>
        <shortName evidence="5">AtGGCT2;1</shortName>
        <ecNumber evidence="4">4.3.2.9</ecNumber>
    </recommendedName>
    <alternativeName>
        <fullName evidence="5">Gamma-glutamyl cyclotransferase 2;1</fullName>
    </alternativeName>
</protein>
<dbReference type="EC" id="4.3.2.9" evidence="4"/>
<dbReference type="EMBL" id="AC005965">
    <property type="status" value="NOT_ANNOTATED_CDS"/>
    <property type="molecule type" value="Genomic_DNA"/>
</dbReference>
<dbReference type="EMBL" id="CP002688">
    <property type="protein sequence ID" value="AED93538.1"/>
    <property type="molecule type" value="Genomic_DNA"/>
</dbReference>
<dbReference type="EMBL" id="AK117855">
    <property type="protein sequence ID" value="BAC42496.1"/>
    <property type="molecule type" value="mRNA"/>
</dbReference>
<dbReference type="EMBL" id="BT005234">
    <property type="protein sequence ID" value="AAO63298.1"/>
    <property type="molecule type" value="mRNA"/>
</dbReference>
<dbReference type="RefSeq" id="NP_197994.1">
    <property type="nucleotide sequence ID" value="NM_122523.4"/>
</dbReference>
<dbReference type="SMR" id="Q8GY54"/>
<dbReference type="FunCoup" id="Q8GY54">
    <property type="interactions" value="1595"/>
</dbReference>
<dbReference type="STRING" id="3702.Q8GY54"/>
<dbReference type="PaxDb" id="3702-AT5G26220.1"/>
<dbReference type="ProteomicsDB" id="247065"/>
<dbReference type="DNASU" id="832691"/>
<dbReference type="EnsemblPlants" id="AT5G26220.1">
    <property type="protein sequence ID" value="AT5G26220.1"/>
    <property type="gene ID" value="AT5G26220"/>
</dbReference>
<dbReference type="GeneID" id="832691"/>
<dbReference type="Gramene" id="AT5G26220.1">
    <property type="protein sequence ID" value="AT5G26220.1"/>
    <property type="gene ID" value="AT5G26220"/>
</dbReference>
<dbReference type="KEGG" id="ath:AT5G26220"/>
<dbReference type="Araport" id="AT5G26220"/>
<dbReference type="TAIR" id="AT5G26220">
    <property type="gene designation" value="GGCT2"/>
</dbReference>
<dbReference type="eggNOG" id="KOG3182">
    <property type="taxonomic scope" value="Eukaryota"/>
</dbReference>
<dbReference type="HOGENOM" id="CLU_070703_2_1_1"/>
<dbReference type="InParanoid" id="Q8GY54"/>
<dbReference type="OMA" id="EVPAHFK"/>
<dbReference type="OrthoDB" id="1933483at2759"/>
<dbReference type="PhylomeDB" id="Q8GY54"/>
<dbReference type="PRO" id="PR:Q8GY54"/>
<dbReference type="Proteomes" id="UP000006548">
    <property type="component" value="Chromosome 5"/>
</dbReference>
<dbReference type="ExpressionAtlas" id="Q8GY54">
    <property type="expression patterns" value="baseline and differential"/>
</dbReference>
<dbReference type="GO" id="GO:0005737">
    <property type="term" value="C:cytoplasm"/>
    <property type="evidence" value="ECO:0000314"/>
    <property type="project" value="UniProtKB"/>
</dbReference>
<dbReference type="GO" id="GO:0003839">
    <property type="term" value="F:gamma-glutamylcyclotransferase activity"/>
    <property type="evidence" value="ECO:0000314"/>
    <property type="project" value="UniProtKB"/>
</dbReference>
<dbReference type="GO" id="GO:0061928">
    <property type="term" value="F:glutathione specific gamma-glutamylcyclotransferase activity"/>
    <property type="evidence" value="ECO:0000314"/>
    <property type="project" value="FlyBase"/>
</dbReference>
<dbReference type="GO" id="GO:0006751">
    <property type="term" value="P:glutathione catabolic process"/>
    <property type="evidence" value="ECO:0000314"/>
    <property type="project" value="UniProtKB"/>
</dbReference>
<dbReference type="GO" id="GO:0046686">
    <property type="term" value="P:response to cadmium ion"/>
    <property type="evidence" value="ECO:0000270"/>
    <property type="project" value="TAIR"/>
</dbReference>
<dbReference type="GO" id="GO:0010288">
    <property type="term" value="P:response to lead ion"/>
    <property type="evidence" value="ECO:0000270"/>
    <property type="project" value="TAIR"/>
</dbReference>
<dbReference type="CDD" id="cd06661">
    <property type="entry name" value="GGCT_like"/>
    <property type="match status" value="1"/>
</dbReference>
<dbReference type="FunFam" id="3.10.490.10:FF:000002">
    <property type="entry name" value="Gamma-glutamylcyclotransferase"/>
    <property type="match status" value="1"/>
</dbReference>
<dbReference type="Gene3D" id="3.10.490.10">
    <property type="entry name" value="Gamma-glutamyl cyclotransferase-like"/>
    <property type="match status" value="1"/>
</dbReference>
<dbReference type="InterPro" id="IPR006840">
    <property type="entry name" value="ChaC"/>
</dbReference>
<dbReference type="InterPro" id="IPR013024">
    <property type="entry name" value="GGCT-like"/>
</dbReference>
<dbReference type="PANTHER" id="PTHR12192">
    <property type="entry name" value="CATION TRANSPORT PROTEIN CHAC-RELATED"/>
    <property type="match status" value="1"/>
</dbReference>
<dbReference type="PANTHER" id="PTHR12192:SF27">
    <property type="entry name" value="GAMMA-GLUTAMYLCYCLOTRANSFERASE 2-1"/>
    <property type="match status" value="1"/>
</dbReference>
<dbReference type="Pfam" id="PF04752">
    <property type="entry name" value="ChaC"/>
    <property type="match status" value="1"/>
</dbReference>
<comment type="function">
    <text evidence="4">Catalyzes the formation of 5-oxoproline from gamma-glutamyl dipeptides and plays a significant role in glutathione (GSH) homeostasis. Converts both GSH and gamma-glutamyl-L-alanine to 5-oxoproline in vitro. Plays a role in detoxification of heavy metals and metalloids by recycling glutamate and maintaining GSH homeostasis.</text>
</comment>
<comment type="catalytic activity">
    <reaction evidence="4">
        <text>an alpha-(gamma-L-glutamyl)-L-amino acid = 5-oxo-L-proline + an L-alpha-amino acid</text>
        <dbReference type="Rhea" id="RHEA:20505"/>
        <dbReference type="ChEBI" id="CHEBI:58402"/>
        <dbReference type="ChEBI" id="CHEBI:59869"/>
        <dbReference type="ChEBI" id="CHEBI:71304"/>
        <dbReference type="EC" id="4.3.2.9"/>
    </reaction>
</comment>
<comment type="cofactor">
    <cofactor evidence="2">
        <name>Mn(2+)</name>
        <dbReference type="ChEBI" id="CHEBI:29035"/>
    </cofactor>
    <text evidence="2">Binds 2 Mn(2+) ions per subunit.</text>
</comment>
<comment type="subcellular location">
    <subcellularLocation>
        <location evidence="4">Cytoplasm</location>
    </subcellularLocation>
</comment>
<comment type="tissue specificity">
    <text evidence="4">Expressed in the central vascular bundle of roots, leaf veins, hydathodes, cauline leaves, shoot apex, sepal veins, flower receptacles and developing seeds.</text>
</comment>
<comment type="induction">
    <text evidence="3 4">By cadmium and lead (PubMed:15708574). Induced by arsenite (PubMed:24214398).</text>
</comment>
<comment type="disruption phenotype">
    <text evidence="4">No visible phenotype under normal growth conditions, but mutant plants show increased tolerance to arsenite and cadmium.</text>
</comment>
<comment type="similarity">
    <text evidence="6">Belongs to the gamma-glutamylcyclotransferase family.</text>
</comment>
<proteinExistence type="evidence at protein level"/>
<gene>
    <name evidence="5" type="primary">GGCT2;1</name>
    <name evidence="7" type="ordered locus">At5g26220</name>
</gene>
<organism>
    <name type="scientific">Arabidopsis thaliana</name>
    <name type="common">Mouse-ear cress</name>
    <dbReference type="NCBI Taxonomy" id="3702"/>
    <lineage>
        <taxon>Eukaryota</taxon>
        <taxon>Viridiplantae</taxon>
        <taxon>Streptophyta</taxon>
        <taxon>Embryophyta</taxon>
        <taxon>Tracheophyta</taxon>
        <taxon>Spermatophyta</taxon>
        <taxon>Magnoliopsida</taxon>
        <taxon>eudicotyledons</taxon>
        <taxon>Gunneridae</taxon>
        <taxon>Pentapetalae</taxon>
        <taxon>rosids</taxon>
        <taxon>malvids</taxon>
        <taxon>Brassicales</taxon>
        <taxon>Brassicaceae</taxon>
        <taxon>Camelineae</taxon>
        <taxon>Arabidopsis</taxon>
    </lineage>
</organism>
<evidence type="ECO:0000250" key="1">
    <source>
        <dbReference type="UniProtKB" id="O75223"/>
    </source>
</evidence>
<evidence type="ECO:0000250" key="2">
    <source>
        <dbReference type="UniProtKB" id="P30184"/>
    </source>
</evidence>
<evidence type="ECO:0000269" key="3">
    <source>
    </source>
</evidence>
<evidence type="ECO:0000269" key="4">
    <source>
    </source>
</evidence>
<evidence type="ECO:0000303" key="5">
    <source>
    </source>
</evidence>
<evidence type="ECO:0000305" key="6"/>
<evidence type="ECO:0000312" key="7">
    <source>
        <dbReference type="Araport" id="AT5G26220"/>
    </source>
</evidence>
<sequence>MVLWVFGYGSLIWNPGFDFDEKLIGYIKDYKRVFDLACIDHRGTPEHPARTCTLEQSTGAICWGAAYCVRGGPEKEKLAMEYLERRECEYDSKTLVEFYTENDTSTPIVTGVIVFTSTPDKVSNKYYLGPAPLEEMARQIATASGPCGNNREYLFKLEKAMFDIEHEEEYVIELANEVRKQLDLPEEVKALLKPIVSHVSVKSQAHVSTRQRVFAS</sequence>
<keyword id="KW-0963">Cytoplasm</keyword>
<keyword id="KW-0456">Lyase</keyword>
<keyword id="KW-1185">Reference proteome</keyword>